<organism>
    <name type="scientific">Rickettsia prowazekii (strain Madrid E)</name>
    <dbReference type="NCBI Taxonomy" id="272947"/>
    <lineage>
        <taxon>Bacteria</taxon>
        <taxon>Pseudomonadati</taxon>
        <taxon>Pseudomonadota</taxon>
        <taxon>Alphaproteobacteria</taxon>
        <taxon>Rickettsiales</taxon>
        <taxon>Rickettsiaceae</taxon>
        <taxon>Rickettsieae</taxon>
        <taxon>Rickettsia</taxon>
        <taxon>typhus group</taxon>
    </lineage>
</organism>
<evidence type="ECO:0000255" key="1"/>
<sequence length="60" mass="6827">MNKLLKLFFITIIIYNNIAFAKETGFYMGAAIGIVEPVVRKFRHKYSNTGIIFQICIAGK</sequence>
<proteinExistence type="inferred from homology"/>
<accession>O05977</accession>
<name>Y787_RICPR</name>
<feature type="signal peptide" evidence="1">
    <location>
        <begin position="1"/>
        <end position="21"/>
    </location>
</feature>
<feature type="chain" id="PRO_0000014229" description="Uncharacterized protein RP787">
    <location>
        <begin position="22"/>
        <end position="60"/>
    </location>
</feature>
<keyword id="KW-1185">Reference proteome</keyword>
<keyword id="KW-0732">Signal</keyword>
<gene>
    <name type="ordered locus">RP787</name>
</gene>
<reference key="1">
    <citation type="journal article" date="1997" name="Microbiology">
        <title>Genomic rearrangements during evolution of the obligate intracellular parasite Rickettsia prowazekii as inferred from an analysis of 52015 bp nucleotide sequence.</title>
        <authorList>
            <person name="Andersson J.O."/>
            <person name="Andersson S.G.E."/>
        </authorList>
    </citation>
    <scope>NUCLEOTIDE SEQUENCE [GENOMIC DNA]</scope>
    <source>
        <strain>Madrid E</strain>
    </source>
</reference>
<reference key="2">
    <citation type="journal article" date="1998" name="Nature">
        <title>The genome sequence of Rickettsia prowazekii and the origin of mitochondria.</title>
        <authorList>
            <person name="Andersson S.G.E."/>
            <person name="Zomorodipour A."/>
            <person name="Andersson J.O."/>
            <person name="Sicheritz-Ponten T."/>
            <person name="Alsmark U.C.M."/>
            <person name="Podowski R.M."/>
            <person name="Naeslund A.K."/>
            <person name="Eriksson A.-S."/>
            <person name="Winkler H.H."/>
            <person name="Kurland C.G."/>
        </authorList>
    </citation>
    <scope>NUCLEOTIDE SEQUENCE [LARGE SCALE GENOMIC DNA]</scope>
    <source>
        <strain>Madrid E</strain>
    </source>
</reference>
<protein>
    <recommendedName>
        <fullName>Uncharacterized protein RP787</fullName>
    </recommendedName>
</protein>
<dbReference type="EMBL" id="Y11779">
    <property type="protein sequence ID" value="CAA72461.1"/>
    <property type="molecule type" value="Genomic_DNA"/>
</dbReference>
<dbReference type="EMBL" id="AJ235273">
    <property type="protein sequence ID" value="CAA15213.1"/>
    <property type="molecule type" value="Genomic_DNA"/>
</dbReference>
<dbReference type="PIR" id="E71639">
    <property type="entry name" value="E71639"/>
</dbReference>
<dbReference type="STRING" id="272947.gene:17555856"/>
<dbReference type="EnsemblBacteria" id="CAA15213">
    <property type="protein sequence ID" value="CAA15213"/>
    <property type="gene ID" value="CAA15213"/>
</dbReference>
<dbReference type="KEGG" id="rpr:RP787"/>
<dbReference type="HOGENOM" id="CLU_2993838_0_0_5"/>
<dbReference type="Proteomes" id="UP000002480">
    <property type="component" value="Chromosome"/>
</dbReference>